<sequence>MAGGGPVASTTTNRASQYGYARGGLNWYIFIVALTAGSGGLLFGYDIGVTGGVTSMPEFLQKFFPSIYDRTQQPSDSKDPYCTYDDQKLQLFTSSFFLAGMFVSFFAGSVVRRWGRKPTMLIASVLFLAGAGLNAGAQDLAMLVIGRVLLGFGVGGGNNAVPLYLSECAPPKYRGGLNMMFQLAVTIGIIVAQLVNYGTQTMNNGWRLSLGLAGVPAIILLIGSLLLPETPNSLIERGHRRRGRAVLARLRRTEAVDTEFEDICAAAEESTRYTLRQSWAALFSRQYSPMLIVTSLIAMLQQLTGINAIMFYVPVLFSSFGTARHAALLNTVIIGAVNVAATFVSIFSVDKFGRRGLFLEGGIQMFIGQVVTAAVLGVELNKYGTNLPSSTAAGVLVVICVYVAAFAWSWGPLGWLVPSEIQTLETRGAGMSMAVIVNFLFSFVIGQAFLSMMCAMRWGVFLFFAGWVVIMTFFVYFCLPETKGVPVETVPTMFARHWLWGRVMGEKGRALVAADEARKAGTVAFKVESGSEDGKPASDQ</sequence>
<name>HUP2_PARKE</name>
<protein>
    <recommendedName>
        <fullName>H(+)/hexose cotransporter 2</fullName>
    </recommendedName>
    <alternativeName>
        <fullName>Galactose/H(+) symporter</fullName>
    </alternativeName>
</protein>
<reference key="1">
    <citation type="journal article" date="1995" name="Plant Physiol.">
        <title>Subcellular localization of the inducible Chlorella HUP1 monosaccharide-H+ symporter and cloning of a Co-induced galactose-H+ symporter.</title>
        <authorList>
            <person name="Stadler R."/>
            <person name="Wolf K."/>
            <person name="Hilgarth C."/>
            <person name="Tanner W."/>
            <person name="Sauer N.K."/>
        </authorList>
    </citation>
    <scope>NUCLEOTIDE SEQUENCE [MRNA]</scope>
</reference>
<proteinExistence type="evidence at transcript level"/>
<evidence type="ECO:0000255" key="1"/>
<evidence type="ECO:0000305" key="2"/>
<comment type="function">
    <text>Active uptake of galactose.</text>
</comment>
<comment type="subcellular location">
    <subcellularLocation>
        <location>Membrane</location>
        <topology>Multi-pass membrane protein</topology>
    </subcellularLocation>
</comment>
<comment type="similarity">
    <text evidence="2">Belongs to the major facilitator superfamily. Sugar transporter (TC 2.A.1.1) family.</text>
</comment>
<organism>
    <name type="scientific">Parachlorella kessleri</name>
    <name type="common">Green alga</name>
    <name type="synonym">Chlorella kessleri</name>
    <dbReference type="NCBI Taxonomy" id="3074"/>
    <lineage>
        <taxon>Eukaryota</taxon>
        <taxon>Viridiplantae</taxon>
        <taxon>Chlorophyta</taxon>
        <taxon>core chlorophytes</taxon>
        <taxon>Trebouxiophyceae</taxon>
        <taxon>Chlorellales</taxon>
        <taxon>Chlorellaceae</taxon>
        <taxon>Parachlorella</taxon>
    </lineage>
</organism>
<gene>
    <name type="primary">HUP2</name>
</gene>
<dbReference type="EMBL" id="X66855">
    <property type="protein sequence ID" value="CAA47323.1"/>
    <property type="molecule type" value="mRNA"/>
</dbReference>
<dbReference type="SMR" id="Q39524"/>
<dbReference type="GO" id="GO:0016020">
    <property type="term" value="C:membrane"/>
    <property type="evidence" value="ECO:0007669"/>
    <property type="project" value="UniProtKB-SubCell"/>
</dbReference>
<dbReference type="GO" id="GO:0015145">
    <property type="term" value="F:monosaccharide transmembrane transporter activity"/>
    <property type="evidence" value="ECO:0007669"/>
    <property type="project" value="InterPro"/>
</dbReference>
<dbReference type="GO" id="GO:0015293">
    <property type="term" value="F:symporter activity"/>
    <property type="evidence" value="ECO:0007669"/>
    <property type="project" value="UniProtKB-KW"/>
</dbReference>
<dbReference type="CDD" id="cd17361">
    <property type="entry name" value="MFS_STP"/>
    <property type="match status" value="1"/>
</dbReference>
<dbReference type="FunFam" id="1.20.1250.20:FF:000002">
    <property type="entry name" value="Sugar transport protein 13"/>
    <property type="match status" value="1"/>
</dbReference>
<dbReference type="Gene3D" id="1.20.1250.20">
    <property type="entry name" value="MFS general substrate transporter like domains"/>
    <property type="match status" value="1"/>
</dbReference>
<dbReference type="InterPro" id="IPR020846">
    <property type="entry name" value="MFS_dom"/>
</dbReference>
<dbReference type="InterPro" id="IPR044778">
    <property type="entry name" value="MFS_STP/MST-like_plant"/>
</dbReference>
<dbReference type="InterPro" id="IPR005828">
    <property type="entry name" value="MFS_sugar_transport-like"/>
</dbReference>
<dbReference type="InterPro" id="IPR036259">
    <property type="entry name" value="MFS_trans_sf"/>
</dbReference>
<dbReference type="InterPro" id="IPR045262">
    <property type="entry name" value="STP/PLT_plant"/>
</dbReference>
<dbReference type="InterPro" id="IPR003663">
    <property type="entry name" value="Sugar/inositol_transpt"/>
</dbReference>
<dbReference type="InterPro" id="IPR005829">
    <property type="entry name" value="Sugar_transporter_CS"/>
</dbReference>
<dbReference type="NCBIfam" id="TIGR00879">
    <property type="entry name" value="SP"/>
    <property type="match status" value="1"/>
</dbReference>
<dbReference type="PANTHER" id="PTHR23500:SF357">
    <property type="entry name" value="IP12678P"/>
    <property type="match status" value="1"/>
</dbReference>
<dbReference type="PANTHER" id="PTHR23500">
    <property type="entry name" value="SOLUTE CARRIER FAMILY 2, FACILITATED GLUCOSE TRANSPORTER"/>
    <property type="match status" value="1"/>
</dbReference>
<dbReference type="Pfam" id="PF00083">
    <property type="entry name" value="Sugar_tr"/>
    <property type="match status" value="1"/>
</dbReference>
<dbReference type="PRINTS" id="PR00171">
    <property type="entry name" value="SUGRTRNSPORT"/>
</dbReference>
<dbReference type="SUPFAM" id="SSF103473">
    <property type="entry name" value="MFS general substrate transporter"/>
    <property type="match status" value="1"/>
</dbReference>
<dbReference type="PROSITE" id="PS50850">
    <property type="entry name" value="MFS"/>
    <property type="match status" value="1"/>
</dbReference>
<dbReference type="PROSITE" id="PS00216">
    <property type="entry name" value="SUGAR_TRANSPORT_1"/>
    <property type="match status" value="1"/>
</dbReference>
<dbReference type="PROSITE" id="PS00217">
    <property type="entry name" value="SUGAR_TRANSPORT_2"/>
    <property type="match status" value="1"/>
</dbReference>
<accession>Q39524</accession>
<keyword id="KW-0472">Membrane</keyword>
<keyword id="KW-0762">Sugar transport</keyword>
<keyword id="KW-0769">Symport</keyword>
<keyword id="KW-0812">Transmembrane</keyword>
<keyword id="KW-1133">Transmembrane helix</keyword>
<keyword id="KW-0813">Transport</keyword>
<feature type="chain" id="PRO_0000050429" description="H(+)/hexose cotransporter 2">
    <location>
        <begin position="1"/>
        <end position="540"/>
    </location>
</feature>
<feature type="topological domain" description="Cytoplasmic" evidence="1">
    <location>
        <begin position="1"/>
        <end position="29"/>
    </location>
</feature>
<feature type="transmembrane region" description="Helical; Name=1" evidence="1">
    <location>
        <begin position="30"/>
        <end position="50"/>
    </location>
</feature>
<feature type="topological domain" description="Extracellular" evidence="1">
    <location>
        <begin position="51"/>
        <end position="90"/>
    </location>
</feature>
<feature type="transmembrane region" description="Helical; Name=2" evidence="1">
    <location>
        <begin position="91"/>
        <end position="111"/>
    </location>
</feature>
<feature type="topological domain" description="Cytoplasmic" evidence="1">
    <location>
        <begin position="112"/>
        <end position="124"/>
    </location>
</feature>
<feature type="transmembrane region" description="Helical; Name=3" evidence="1">
    <location>
        <begin position="125"/>
        <end position="135"/>
    </location>
</feature>
<feature type="topological domain" description="Extracellular" evidence="1">
    <location>
        <begin position="136"/>
        <end position="147"/>
    </location>
</feature>
<feature type="transmembrane region" description="Helical; Name=4" evidence="1">
    <location>
        <begin position="148"/>
        <end position="168"/>
    </location>
</feature>
<feature type="topological domain" description="Cytoplasmic" evidence="1">
    <location>
        <begin position="169"/>
        <end position="176"/>
    </location>
</feature>
<feature type="transmembrane region" description="Helical; Name=5" evidence="1">
    <location>
        <begin position="177"/>
        <end position="197"/>
    </location>
</feature>
<feature type="topological domain" description="Extracellular" evidence="1">
    <location>
        <begin position="198"/>
        <end position="207"/>
    </location>
</feature>
<feature type="transmembrane region" description="Helical; Name=6" evidence="1">
    <location>
        <begin position="208"/>
        <end position="228"/>
    </location>
</feature>
<feature type="topological domain" description="Cytoplasmic" evidence="1">
    <location>
        <begin position="229"/>
        <end position="296"/>
    </location>
</feature>
<feature type="transmembrane region" description="Helical; Name=7" evidence="1">
    <location>
        <begin position="297"/>
        <end position="317"/>
    </location>
</feature>
<feature type="topological domain" description="Extracellular" evidence="1">
    <location>
        <begin position="318"/>
        <end position="326"/>
    </location>
</feature>
<feature type="transmembrane region" description="Helical; Name=8" evidence="1">
    <location>
        <begin position="327"/>
        <end position="337"/>
    </location>
</feature>
<feature type="topological domain" description="Cytoplasmic" evidence="1">
    <location>
        <begin position="338"/>
        <end position="355"/>
    </location>
</feature>
<feature type="transmembrane region" description="Helical; Name=9" evidence="1">
    <location>
        <begin position="356"/>
        <end position="376"/>
    </location>
</feature>
<feature type="topological domain" description="Extracellular" evidence="1">
    <location>
        <begin position="377"/>
        <end position="396"/>
    </location>
</feature>
<feature type="transmembrane region" description="Helical; Name=10" evidence="1">
    <location>
        <begin position="397"/>
        <end position="417"/>
    </location>
</feature>
<feature type="topological domain" description="Cytoplasmic" evidence="1">
    <location>
        <begin position="418"/>
        <end position="435"/>
    </location>
</feature>
<feature type="transmembrane region" description="Helical; Name=11" evidence="1">
    <location>
        <begin position="436"/>
        <end position="456"/>
    </location>
</feature>
<feature type="topological domain" description="Extracellular" evidence="1">
    <location>
        <begin position="457"/>
        <end position="458"/>
    </location>
</feature>
<feature type="transmembrane region" description="Helical; Name=12" evidence="1">
    <location>
        <begin position="459"/>
        <end position="479"/>
    </location>
</feature>
<feature type="topological domain" description="Cytoplasmic" evidence="1">
    <location>
        <begin position="480"/>
        <end position="540"/>
    </location>
</feature>